<accession>Q083I0</accession>
<feature type="chain" id="PRO_0000298182" description="Cell division topological specificity factor">
    <location>
        <begin position="1"/>
        <end position="86"/>
    </location>
</feature>
<sequence length="86" mass="9876">MSILDYFRSSKKPNTASLAKERLQIIVAHQRGERGAPDYFPKMKQEIIEVIRKYVQISDDQVSVQLDQNDDNLSVLELNVTLPDSK</sequence>
<reference key="1">
    <citation type="submission" date="2006-08" db="EMBL/GenBank/DDBJ databases">
        <title>Complete sequence of Shewanella frigidimarina NCIMB 400.</title>
        <authorList>
            <consortium name="US DOE Joint Genome Institute"/>
            <person name="Copeland A."/>
            <person name="Lucas S."/>
            <person name="Lapidus A."/>
            <person name="Barry K."/>
            <person name="Detter J.C."/>
            <person name="Glavina del Rio T."/>
            <person name="Hammon N."/>
            <person name="Israni S."/>
            <person name="Dalin E."/>
            <person name="Tice H."/>
            <person name="Pitluck S."/>
            <person name="Fredrickson J.K."/>
            <person name="Kolker E."/>
            <person name="McCuel L.A."/>
            <person name="DiChristina T."/>
            <person name="Nealson K.H."/>
            <person name="Newman D."/>
            <person name="Tiedje J.M."/>
            <person name="Zhou J."/>
            <person name="Romine M.F."/>
            <person name="Culley D.E."/>
            <person name="Serres M."/>
            <person name="Chertkov O."/>
            <person name="Brettin T."/>
            <person name="Bruce D."/>
            <person name="Han C."/>
            <person name="Tapia R."/>
            <person name="Gilna P."/>
            <person name="Schmutz J."/>
            <person name="Larimer F."/>
            <person name="Land M."/>
            <person name="Hauser L."/>
            <person name="Kyrpides N."/>
            <person name="Mikhailova N."/>
            <person name="Richardson P."/>
        </authorList>
    </citation>
    <scope>NUCLEOTIDE SEQUENCE [LARGE SCALE GENOMIC DNA]</scope>
    <source>
        <strain>NCIMB 400</strain>
    </source>
</reference>
<comment type="function">
    <text evidence="1">Prevents the cell division inhibition by proteins MinC and MinD at internal division sites while permitting inhibition at polar sites. This ensures cell division at the proper site by restricting the formation of a division septum at the midpoint of the long axis of the cell.</text>
</comment>
<comment type="similarity">
    <text evidence="1">Belongs to the MinE family.</text>
</comment>
<proteinExistence type="inferred from homology"/>
<dbReference type="EMBL" id="CP000447">
    <property type="protein sequence ID" value="ABI71585.1"/>
    <property type="molecule type" value="Genomic_DNA"/>
</dbReference>
<dbReference type="RefSeq" id="WP_011637201.1">
    <property type="nucleotide sequence ID" value="NC_008345.1"/>
</dbReference>
<dbReference type="SMR" id="Q083I0"/>
<dbReference type="STRING" id="318167.Sfri_1735"/>
<dbReference type="KEGG" id="sfr:Sfri_1735"/>
<dbReference type="eggNOG" id="COG0851">
    <property type="taxonomic scope" value="Bacteria"/>
</dbReference>
<dbReference type="HOGENOM" id="CLU_137929_2_2_6"/>
<dbReference type="OrthoDB" id="9802655at2"/>
<dbReference type="Proteomes" id="UP000000684">
    <property type="component" value="Chromosome"/>
</dbReference>
<dbReference type="GO" id="GO:0051301">
    <property type="term" value="P:cell division"/>
    <property type="evidence" value="ECO:0007669"/>
    <property type="project" value="UniProtKB-KW"/>
</dbReference>
<dbReference type="GO" id="GO:0032955">
    <property type="term" value="P:regulation of division septum assembly"/>
    <property type="evidence" value="ECO:0007669"/>
    <property type="project" value="InterPro"/>
</dbReference>
<dbReference type="FunFam" id="3.30.1070.10:FF:000001">
    <property type="entry name" value="Cell division topological specificity factor"/>
    <property type="match status" value="1"/>
</dbReference>
<dbReference type="Gene3D" id="3.30.1070.10">
    <property type="entry name" value="Cell division topological specificity factor MinE"/>
    <property type="match status" value="1"/>
</dbReference>
<dbReference type="HAMAP" id="MF_00262">
    <property type="entry name" value="MinE"/>
    <property type="match status" value="1"/>
</dbReference>
<dbReference type="InterPro" id="IPR005527">
    <property type="entry name" value="MinE"/>
</dbReference>
<dbReference type="InterPro" id="IPR036707">
    <property type="entry name" value="MinE_sf"/>
</dbReference>
<dbReference type="NCBIfam" id="TIGR01215">
    <property type="entry name" value="minE"/>
    <property type="match status" value="1"/>
</dbReference>
<dbReference type="NCBIfam" id="NF001422">
    <property type="entry name" value="PRK00296.1"/>
    <property type="match status" value="1"/>
</dbReference>
<dbReference type="Pfam" id="PF03776">
    <property type="entry name" value="MinE"/>
    <property type="match status" value="1"/>
</dbReference>
<dbReference type="SUPFAM" id="SSF55229">
    <property type="entry name" value="Cell division protein MinE topological specificity domain"/>
    <property type="match status" value="1"/>
</dbReference>
<keyword id="KW-0131">Cell cycle</keyword>
<keyword id="KW-0132">Cell division</keyword>
<keyword id="KW-1185">Reference proteome</keyword>
<organism>
    <name type="scientific">Shewanella frigidimarina (strain NCIMB 400)</name>
    <dbReference type="NCBI Taxonomy" id="318167"/>
    <lineage>
        <taxon>Bacteria</taxon>
        <taxon>Pseudomonadati</taxon>
        <taxon>Pseudomonadota</taxon>
        <taxon>Gammaproteobacteria</taxon>
        <taxon>Alteromonadales</taxon>
        <taxon>Shewanellaceae</taxon>
        <taxon>Shewanella</taxon>
    </lineage>
</organism>
<protein>
    <recommendedName>
        <fullName evidence="1">Cell division topological specificity factor</fullName>
    </recommendedName>
</protein>
<name>MINE_SHEFN</name>
<evidence type="ECO:0000255" key="1">
    <source>
        <dbReference type="HAMAP-Rule" id="MF_00262"/>
    </source>
</evidence>
<gene>
    <name evidence="1" type="primary">minE</name>
    <name type="ordered locus">Sfri_1735</name>
</gene>